<name>TGL_BACAC</name>
<feature type="chain" id="PRO_1000197961" description="Protein-glutamine gamma-glutamyltransferase">
    <location>
        <begin position="1"/>
        <end position="276"/>
    </location>
</feature>
<protein>
    <recommendedName>
        <fullName evidence="1">Protein-glutamine gamma-glutamyltransferase</fullName>
        <ecNumber evidence="1">2.3.2.13</ecNumber>
    </recommendedName>
    <alternativeName>
        <fullName evidence="1">Transglutaminase</fullName>
        <shortName evidence="1">TGase</shortName>
    </alternativeName>
</protein>
<reference key="1">
    <citation type="submission" date="2008-10" db="EMBL/GenBank/DDBJ databases">
        <title>Genome sequence of Bacillus anthracis str. CDC 684.</title>
        <authorList>
            <person name="Dodson R.J."/>
            <person name="Munk A.C."/>
            <person name="Brettin T."/>
            <person name="Bruce D."/>
            <person name="Detter C."/>
            <person name="Tapia R."/>
            <person name="Han C."/>
            <person name="Sutton G."/>
            <person name="Sims D."/>
        </authorList>
    </citation>
    <scope>NUCLEOTIDE SEQUENCE [LARGE SCALE GENOMIC DNA]</scope>
    <source>
        <strain>CDC 684 / NRRL 3495</strain>
    </source>
</reference>
<dbReference type="EC" id="2.3.2.13" evidence="1"/>
<dbReference type="EMBL" id="CP001215">
    <property type="protein sequence ID" value="ACP13343.1"/>
    <property type="molecule type" value="Genomic_DNA"/>
</dbReference>
<dbReference type="RefSeq" id="WP_000635329.1">
    <property type="nucleotide sequence ID" value="NC_012581.1"/>
</dbReference>
<dbReference type="SMR" id="C3LI29"/>
<dbReference type="KEGG" id="bah:BAMEG_4216"/>
<dbReference type="HOGENOM" id="CLU_088922_0_0_9"/>
<dbReference type="GO" id="GO:0003810">
    <property type="term" value="F:protein-glutamine gamma-glutamyltransferase activity"/>
    <property type="evidence" value="ECO:0007669"/>
    <property type="project" value="UniProtKB-UniRule"/>
</dbReference>
<dbReference type="GO" id="GO:0030435">
    <property type="term" value="P:sporulation resulting in formation of a cellular spore"/>
    <property type="evidence" value="ECO:0007669"/>
    <property type="project" value="UniProtKB-UniRule"/>
</dbReference>
<dbReference type="HAMAP" id="MF_00727">
    <property type="entry name" value="Tgl"/>
    <property type="match status" value="1"/>
</dbReference>
<dbReference type="InterPro" id="IPR020916">
    <property type="entry name" value="Gln_gamma-glutamylTfrase_bac"/>
</dbReference>
<dbReference type="NCBIfam" id="NF002869">
    <property type="entry name" value="PRK03187.1"/>
    <property type="match status" value="1"/>
</dbReference>
<dbReference type="Pfam" id="PF20085">
    <property type="entry name" value="TGL"/>
    <property type="match status" value="1"/>
</dbReference>
<evidence type="ECO:0000255" key="1">
    <source>
        <dbReference type="HAMAP-Rule" id="MF_00727"/>
    </source>
</evidence>
<proteinExistence type="inferred from homology"/>
<gene>
    <name evidence="1" type="primary">tgl</name>
    <name type="ordered locus">BAMEG_4216</name>
</gene>
<accession>C3LI29</accession>
<organism>
    <name type="scientific">Bacillus anthracis (strain CDC 684 / NRRL 3495)</name>
    <dbReference type="NCBI Taxonomy" id="568206"/>
    <lineage>
        <taxon>Bacteria</taxon>
        <taxon>Bacillati</taxon>
        <taxon>Bacillota</taxon>
        <taxon>Bacilli</taxon>
        <taxon>Bacillales</taxon>
        <taxon>Bacillaceae</taxon>
        <taxon>Bacillus</taxon>
        <taxon>Bacillus cereus group</taxon>
    </lineage>
</organism>
<sequence>MIVIGRSIVHPYITNEYEPFAAEKQQILSIMAGNQEIYSFRTSDELSFDLNLRVNIITSALELFQSGFQFRTFQQSFCNPQYWKRTSLGGFELLPNIPPSIAIQDIFKNGKLYGTECATAMIIIFYKALLSLYEKETFNRLFANLLLYTWDYDQDLKLITKTGGDLVPGDLVYFKNPQVNPATIEWQGENTIYLGNFFFYGHGVGVKTKEEIIYALNERRVPYAFISAFLTDTITRIDSRLMSYHASPSTPQTSIGFIPIRDDAIVATVGNTTTVY</sequence>
<keyword id="KW-0012">Acyltransferase</keyword>
<keyword id="KW-0749">Sporulation</keyword>
<keyword id="KW-0808">Transferase</keyword>
<comment type="function">
    <text evidence="1">Probably plays a role in the assembly of the spore coat proteins by catalyzing epsilon-(gamma-glutamyl)lysine cross-links.</text>
</comment>
<comment type="catalytic activity">
    <reaction evidence="1">
        <text>L-glutaminyl-[protein] + L-lysyl-[protein] = [protein]-L-lysyl-N(6)-5-L-glutamyl-[protein] + NH4(+)</text>
        <dbReference type="Rhea" id="RHEA:54816"/>
        <dbReference type="Rhea" id="RHEA-COMP:9752"/>
        <dbReference type="Rhea" id="RHEA-COMP:10207"/>
        <dbReference type="Rhea" id="RHEA-COMP:14005"/>
        <dbReference type="ChEBI" id="CHEBI:28938"/>
        <dbReference type="ChEBI" id="CHEBI:29969"/>
        <dbReference type="ChEBI" id="CHEBI:30011"/>
        <dbReference type="ChEBI" id="CHEBI:138370"/>
        <dbReference type="EC" id="2.3.2.13"/>
    </reaction>
</comment>
<comment type="similarity">
    <text evidence="1">Belongs to the bacillus TGase family.</text>
</comment>